<accession>G2TRK5</accession>
<sequence>MRFLFFLPPSFITSFLYLALYSFPVPYCII</sequence>
<protein>
    <recommendedName>
        <fullName>Putative uncharacterized protein SPAC110.05</fullName>
    </recommendedName>
</protein>
<feature type="signal peptide" evidence="1">
    <location>
        <begin position="1"/>
        <end position="22"/>
    </location>
</feature>
<feature type="chain" id="PRO_0000416644" description="Putative uncharacterized protein SPAC110.05">
    <location>
        <begin position="23"/>
        <end position="30"/>
    </location>
</feature>
<dbReference type="EMBL" id="CU329670">
    <property type="protein sequence ID" value="CCD31314.1"/>
    <property type="status" value="ALT_SEQ"/>
    <property type="molecule type" value="Genomic_DNA"/>
</dbReference>
<dbReference type="EnsemblFungi" id="SPAC110.05.1">
    <property type="protein sequence ID" value="SPAC110.05.1:pep"/>
    <property type="gene ID" value="SPAC110.05"/>
</dbReference>
<dbReference type="PomBase" id="SPAC110.05"/>
<dbReference type="VEuPathDB" id="FungiDB:SPAC110.05"/>
<dbReference type="InParanoid" id="G2TRK5"/>
<dbReference type="PRO" id="PR:G2TRK5"/>
<dbReference type="Proteomes" id="UP000002485">
    <property type="component" value="Chromosome I"/>
</dbReference>
<keyword id="KW-1185">Reference proteome</keyword>
<keyword id="KW-0732">Signal</keyword>
<gene>
    <name type="ORF">SPAC110.05</name>
</gene>
<organism>
    <name type="scientific">Schizosaccharomyces pombe (strain 972 / ATCC 24843)</name>
    <name type="common">Fission yeast</name>
    <dbReference type="NCBI Taxonomy" id="284812"/>
    <lineage>
        <taxon>Eukaryota</taxon>
        <taxon>Fungi</taxon>
        <taxon>Dikarya</taxon>
        <taxon>Ascomycota</taxon>
        <taxon>Taphrinomycotina</taxon>
        <taxon>Schizosaccharomycetes</taxon>
        <taxon>Schizosaccharomycetales</taxon>
        <taxon>Schizosaccharomycetaceae</taxon>
        <taxon>Schizosaccharomyces</taxon>
    </lineage>
</organism>
<proteinExistence type="inferred from homology"/>
<evidence type="ECO:0000255" key="1"/>
<evidence type="ECO:0000305" key="2"/>
<comment type="sequence caution" evidence="2">
    <conflict type="erroneous gene model prediction">
        <sequence resource="EMBL-CDS" id="CCD31314"/>
    </conflict>
</comment>
<name>YK35_SCHPO</name>
<reference key="1">
    <citation type="journal article" date="2002" name="Nature">
        <title>The genome sequence of Schizosaccharomyces pombe.</title>
        <authorList>
            <person name="Wood V."/>
            <person name="Gwilliam R."/>
            <person name="Rajandream M.A."/>
            <person name="Lyne M.H."/>
            <person name="Lyne R."/>
            <person name="Stewart A."/>
            <person name="Sgouros J.G."/>
            <person name="Peat N."/>
            <person name="Hayles J."/>
            <person name="Baker S.G."/>
            <person name="Basham D."/>
            <person name="Bowman S."/>
            <person name="Brooks K."/>
            <person name="Brown D."/>
            <person name="Brown S."/>
            <person name="Chillingworth T."/>
            <person name="Churcher C.M."/>
            <person name="Collins M."/>
            <person name="Connor R."/>
            <person name="Cronin A."/>
            <person name="Davis P."/>
            <person name="Feltwell T."/>
            <person name="Fraser A."/>
            <person name="Gentles S."/>
            <person name="Goble A."/>
            <person name="Hamlin N."/>
            <person name="Harris D.E."/>
            <person name="Hidalgo J."/>
            <person name="Hodgson G."/>
            <person name="Holroyd S."/>
            <person name="Hornsby T."/>
            <person name="Howarth S."/>
            <person name="Huckle E.J."/>
            <person name="Hunt S."/>
            <person name="Jagels K."/>
            <person name="James K.D."/>
            <person name="Jones L."/>
            <person name="Jones M."/>
            <person name="Leather S."/>
            <person name="McDonald S."/>
            <person name="McLean J."/>
            <person name="Mooney P."/>
            <person name="Moule S."/>
            <person name="Mungall K.L."/>
            <person name="Murphy L.D."/>
            <person name="Niblett D."/>
            <person name="Odell C."/>
            <person name="Oliver K."/>
            <person name="O'Neil S."/>
            <person name="Pearson D."/>
            <person name="Quail M.A."/>
            <person name="Rabbinowitsch E."/>
            <person name="Rutherford K.M."/>
            <person name="Rutter S."/>
            <person name="Saunders D."/>
            <person name="Seeger K."/>
            <person name="Sharp S."/>
            <person name="Skelton J."/>
            <person name="Simmonds M.N."/>
            <person name="Squares R."/>
            <person name="Squares S."/>
            <person name="Stevens K."/>
            <person name="Taylor K."/>
            <person name="Taylor R.G."/>
            <person name="Tivey A."/>
            <person name="Walsh S.V."/>
            <person name="Warren T."/>
            <person name="Whitehead S."/>
            <person name="Woodward J.R."/>
            <person name="Volckaert G."/>
            <person name="Aert R."/>
            <person name="Robben J."/>
            <person name="Grymonprez B."/>
            <person name="Weltjens I."/>
            <person name="Vanstreels E."/>
            <person name="Rieger M."/>
            <person name="Schaefer M."/>
            <person name="Mueller-Auer S."/>
            <person name="Gabel C."/>
            <person name="Fuchs M."/>
            <person name="Duesterhoeft A."/>
            <person name="Fritzc C."/>
            <person name="Holzer E."/>
            <person name="Moestl D."/>
            <person name="Hilbert H."/>
            <person name="Borzym K."/>
            <person name="Langer I."/>
            <person name="Beck A."/>
            <person name="Lehrach H."/>
            <person name="Reinhardt R."/>
            <person name="Pohl T.M."/>
            <person name="Eger P."/>
            <person name="Zimmermann W."/>
            <person name="Wedler H."/>
            <person name="Wambutt R."/>
            <person name="Purnelle B."/>
            <person name="Goffeau A."/>
            <person name="Cadieu E."/>
            <person name="Dreano S."/>
            <person name="Gloux S."/>
            <person name="Lelaure V."/>
            <person name="Mottier S."/>
            <person name="Galibert F."/>
            <person name="Aves S.J."/>
            <person name="Xiang Z."/>
            <person name="Hunt C."/>
            <person name="Moore K."/>
            <person name="Hurst S.M."/>
            <person name="Lucas M."/>
            <person name="Rochet M."/>
            <person name="Gaillardin C."/>
            <person name="Tallada V.A."/>
            <person name="Garzon A."/>
            <person name="Thode G."/>
            <person name="Daga R.R."/>
            <person name="Cruzado L."/>
            <person name="Jimenez J."/>
            <person name="Sanchez M."/>
            <person name="del Rey F."/>
            <person name="Benito J."/>
            <person name="Dominguez A."/>
            <person name="Revuelta J.L."/>
            <person name="Moreno S."/>
            <person name="Armstrong J."/>
            <person name="Forsburg S.L."/>
            <person name="Cerutti L."/>
            <person name="Lowe T."/>
            <person name="McCombie W.R."/>
            <person name="Paulsen I."/>
            <person name="Potashkin J."/>
            <person name="Shpakovski G.V."/>
            <person name="Ussery D."/>
            <person name="Barrell B.G."/>
            <person name="Nurse P."/>
        </authorList>
    </citation>
    <scope>NUCLEOTIDE SEQUENCE [LARGE SCALE GENOMIC DNA]</scope>
    <source>
        <strain>972 / ATCC 24843</strain>
    </source>
</reference>
<reference key="2">
    <citation type="journal article" date="2011" name="Science">
        <title>Comparative functional genomics of the fission yeasts.</title>
        <authorList>
            <person name="Rhind N."/>
            <person name="Chen Z."/>
            <person name="Yassour M."/>
            <person name="Thompson D.A."/>
            <person name="Haas B.J."/>
            <person name="Habib N."/>
            <person name="Wapinski I."/>
            <person name="Roy S."/>
            <person name="Lin M.F."/>
            <person name="Heiman D.I."/>
            <person name="Young S.K."/>
            <person name="Furuya K."/>
            <person name="Guo Y."/>
            <person name="Pidoux A."/>
            <person name="Chen H.M."/>
            <person name="Robbertse B."/>
            <person name="Goldberg J.M."/>
            <person name="Aoki K."/>
            <person name="Bayne E.H."/>
            <person name="Berlin A.M."/>
            <person name="Desjardins C.A."/>
            <person name="Dobbs E."/>
            <person name="Dukaj L."/>
            <person name="Fan L."/>
            <person name="FitzGerald M.G."/>
            <person name="French C."/>
            <person name="Gujja S."/>
            <person name="Hansen K."/>
            <person name="Keifenheim D."/>
            <person name="Levin J.Z."/>
            <person name="Mosher R.A."/>
            <person name="Mueller C.A."/>
            <person name="Pfiffner J."/>
            <person name="Priest M."/>
            <person name="Russ C."/>
            <person name="Smialowska A."/>
            <person name="Swoboda P."/>
            <person name="Sykes S.M."/>
            <person name="Vaughn M."/>
            <person name="Vengrova S."/>
            <person name="Yoder R."/>
            <person name="Zeng Q."/>
            <person name="Allshire R."/>
            <person name="Baulcombe D."/>
            <person name="Birren B.W."/>
            <person name="Brown W."/>
            <person name="Ekwall K."/>
            <person name="Kellis M."/>
            <person name="Leatherwood J."/>
            <person name="Levin H."/>
            <person name="Margalit H."/>
            <person name="Martienssen R."/>
            <person name="Nieduszynski C.A."/>
            <person name="Spatafora J.W."/>
            <person name="Friedman N."/>
            <person name="Dalgaard J.Z."/>
            <person name="Baumann P."/>
            <person name="Niki H."/>
            <person name="Regev A."/>
            <person name="Nusbaum C."/>
        </authorList>
    </citation>
    <scope>IDENTIFICATION</scope>
</reference>
<reference key="3">
    <citation type="journal article" date="2014" name="Nat. Struct. Mol. Biol.">
        <title>The translational landscape of fission-yeast meiosis and sporulation.</title>
        <authorList>
            <person name="Duncan C.D."/>
            <person name="Mata J."/>
        </authorList>
    </citation>
    <scope>GENE MODEL REVISION</scope>
</reference>